<protein>
    <recommendedName>
        <fullName>Pro-corazonin</fullName>
        <shortName>Crz</shortName>
    </recommendedName>
    <component>
        <recommendedName>
            <fullName>Corazonin</fullName>
        </recommendedName>
    </component>
    <component>
        <recommendedName>
            <fullName>Corazonin precursor-related peptide</fullName>
            <shortName>CPRP</shortName>
        </recommendedName>
    </component>
</protein>
<feature type="signal peptide" evidence="1">
    <location>
        <begin position="1"/>
        <end position="20"/>
    </location>
</feature>
<feature type="chain" id="PRO_0000341605" description="Pro-corazonin" evidence="2">
    <location>
        <begin position="21"/>
        <end position="137"/>
    </location>
</feature>
<feature type="peptide" id="PRO_0000341489" description="Corazonin">
    <location>
        <begin position="21"/>
        <end position="31"/>
    </location>
</feature>
<feature type="peptide" id="PRO_0000341490" description="Corazonin precursor-related peptide">
    <location>
        <begin position="35"/>
        <end position="66"/>
    </location>
</feature>
<feature type="propeptide" id="PRO_0000341491" evidence="1">
    <location>
        <begin position="68"/>
        <end position="137"/>
    </location>
</feature>
<feature type="modified residue" description="Pyrrolidone carboxylic acid" evidence="1">
    <location>
        <position position="21"/>
    </location>
</feature>
<feature type="modified residue" description="Asparagine amide" evidence="1">
    <location>
        <position position="31"/>
    </location>
</feature>
<sequence length="137" mass="15559">MKHVFSTSLIVSLFVIFTDAQTFQYSRGWTNGKRSSPEQTAPSRTLLPHIPLGMDKPDEECRLLIQRFLKSPCDVRLANAIVNRNKDLLRDMADDVNDGTALLYDPVPMVDTAASEDVRFKRGTPDRRLLNDGMHRL</sequence>
<keyword id="KW-0027">Amidation</keyword>
<keyword id="KW-0165">Cleavage on pair of basic residues</keyword>
<keyword id="KW-0527">Neuropeptide</keyword>
<keyword id="KW-0873">Pyrrolidone carboxylic acid</keyword>
<keyword id="KW-1185">Reference proteome</keyword>
<keyword id="KW-0964">Secreted</keyword>
<keyword id="KW-0732">Signal</keyword>
<evidence type="ECO:0000250" key="1">
    <source>
        <dbReference type="UniProtKB" id="Q26377"/>
    </source>
</evidence>
<evidence type="ECO:0000255" key="2"/>
<evidence type="ECO:0000305" key="3"/>
<evidence type="ECO:0000312" key="4">
    <source>
        <dbReference type="EMBL" id="EAT43308.1"/>
    </source>
</evidence>
<organism>
    <name type="scientific">Aedes aegypti</name>
    <name type="common">Yellowfever mosquito</name>
    <name type="synonym">Culex aegypti</name>
    <dbReference type="NCBI Taxonomy" id="7159"/>
    <lineage>
        <taxon>Eukaryota</taxon>
        <taxon>Metazoa</taxon>
        <taxon>Ecdysozoa</taxon>
        <taxon>Arthropoda</taxon>
        <taxon>Hexapoda</taxon>
        <taxon>Insecta</taxon>
        <taxon>Pterygota</taxon>
        <taxon>Neoptera</taxon>
        <taxon>Endopterygota</taxon>
        <taxon>Diptera</taxon>
        <taxon>Nematocera</taxon>
        <taxon>Culicoidea</taxon>
        <taxon>Culicidae</taxon>
        <taxon>Culicinae</taxon>
        <taxon>Aedini</taxon>
        <taxon>Aedes</taxon>
        <taxon>Stegomyia</taxon>
    </lineage>
</organism>
<accession>Q17AN4</accession>
<reference evidence="4" key="1">
    <citation type="journal article" date="2007" name="Science">
        <title>Genome sequence of Aedes aegypti, a major arbovirus vector.</title>
        <authorList>
            <person name="Nene V."/>
            <person name="Wortman J.R."/>
            <person name="Lawson D."/>
            <person name="Haas B.J."/>
            <person name="Kodira C.D."/>
            <person name="Tu Z.J."/>
            <person name="Loftus B.J."/>
            <person name="Xi Z."/>
            <person name="Megy K."/>
            <person name="Grabherr M."/>
            <person name="Ren Q."/>
            <person name="Zdobnov E.M."/>
            <person name="Lobo N.F."/>
            <person name="Campbell K.S."/>
            <person name="Brown S.E."/>
            <person name="Bonaldo M.F."/>
            <person name="Zhu J."/>
            <person name="Sinkins S.P."/>
            <person name="Hogenkamp D.G."/>
            <person name="Amedeo P."/>
            <person name="Arensburger P."/>
            <person name="Atkinson P.W."/>
            <person name="Bidwell S.L."/>
            <person name="Biedler J."/>
            <person name="Birney E."/>
            <person name="Bruggner R.V."/>
            <person name="Costas J."/>
            <person name="Coy M.R."/>
            <person name="Crabtree J."/>
            <person name="Crawford M."/>
            <person name="DeBruyn B."/>
            <person name="DeCaprio D."/>
            <person name="Eiglmeier K."/>
            <person name="Eisenstadt E."/>
            <person name="El-Dorry H."/>
            <person name="Gelbart W.M."/>
            <person name="Gomes S.L."/>
            <person name="Hammond M."/>
            <person name="Hannick L.I."/>
            <person name="Hogan J.R."/>
            <person name="Holmes M.H."/>
            <person name="Jaffe D."/>
            <person name="Johnston S.J."/>
            <person name="Kennedy R.C."/>
            <person name="Koo H."/>
            <person name="Kravitz S."/>
            <person name="Kriventseva E.V."/>
            <person name="Kulp D."/>
            <person name="Labutti K."/>
            <person name="Lee E."/>
            <person name="Li S."/>
            <person name="Lovin D.D."/>
            <person name="Mao C."/>
            <person name="Mauceli E."/>
            <person name="Menck C.F."/>
            <person name="Miller J.R."/>
            <person name="Montgomery P."/>
            <person name="Mori A."/>
            <person name="Nascimento A.L."/>
            <person name="Naveira H.F."/>
            <person name="Nusbaum C."/>
            <person name="O'Leary S.B."/>
            <person name="Orvis J."/>
            <person name="Pertea M."/>
            <person name="Quesneville H."/>
            <person name="Reidenbach K.R."/>
            <person name="Rogers Y.-H.C."/>
            <person name="Roth C.W."/>
            <person name="Schneider J.R."/>
            <person name="Schatz M."/>
            <person name="Shumway M."/>
            <person name="Stanke M."/>
            <person name="Stinson E.O."/>
            <person name="Tubio J.M.C."/>
            <person name="Vanzee J.P."/>
            <person name="Verjovski-Almeida S."/>
            <person name="Werner D."/>
            <person name="White O.R."/>
            <person name="Wyder S."/>
            <person name="Zeng Q."/>
            <person name="Zhao Q."/>
            <person name="Zhao Y."/>
            <person name="Hill C.A."/>
            <person name="Raikhel A.S."/>
            <person name="Soares M.B."/>
            <person name="Knudson D.L."/>
            <person name="Lee N.H."/>
            <person name="Galagan J."/>
            <person name="Salzberg S.L."/>
            <person name="Paulsen I.T."/>
            <person name="Dimopoulos G."/>
            <person name="Collins F.H."/>
            <person name="Bruce B."/>
            <person name="Fraser-Liggett C.M."/>
            <person name="Severson D.W."/>
        </authorList>
    </citation>
    <scope>NUCLEOTIDE SEQUENCE [LARGE SCALE GENOMIC DNA]</scope>
    <source>
        <strain>LVPib12</strain>
    </source>
</reference>
<comment type="function">
    <text evidence="1">Cardioactive peptide. Corazonin is probably involved in the physiological regulation of the heart beat (By similarity).</text>
</comment>
<comment type="subcellular location">
    <molecule>Corazonin</molecule>
    <subcellularLocation>
        <location evidence="1">Secreted</location>
    </subcellularLocation>
</comment>
<comment type="subcellular location">
    <molecule>Corazonin precursor-related peptide</molecule>
    <subcellularLocation>
        <location evidence="1">Secreted</location>
    </subcellularLocation>
</comment>
<comment type="similarity">
    <text evidence="3">Belongs to the corazonin family.</text>
</comment>
<gene>
    <name evidence="1" type="primary">Crz</name>
    <name type="ORF">AAEL005252</name>
</gene>
<name>CORZ_AEDAE</name>
<proteinExistence type="inferred from homology"/>
<dbReference type="EMBL" id="CH477332">
    <property type="protein sequence ID" value="EAT43308.1"/>
    <property type="molecule type" value="Genomic_DNA"/>
</dbReference>
<dbReference type="RefSeq" id="XP_001650567.1">
    <property type="nucleotide sequence ID" value="XM_001650517.1"/>
</dbReference>
<dbReference type="PaxDb" id="7159-AAEL005252-PA"/>
<dbReference type="EnsemblMetazoa" id="AAEL005252-RA">
    <property type="protein sequence ID" value="AAEL005252-PA"/>
    <property type="gene ID" value="AAEL005252"/>
</dbReference>
<dbReference type="VEuPathDB" id="VectorBase:AAEL005252"/>
<dbReference type="eggNOG" id="ENOG502T8PQ">
    <property type="taxonomic scope" value="Eukaryota"/>
</dbReference>
<dbReference type="HOGENOM" id="CLU_1866778_0_0_1"/>
<dbReference type="InParanoid" id="Q17AN4"/>
<dbReference type="OMA" id="HIPLGMD"/>
<dbReference type="OrthoDB" id="6436322at2759"/>
<dbReference type="PhylomeDB" id="Q17AN4"/>
<dbReference type="Proteomes" id="UP000008820">
    <property type="component" value="Unassembled WGS sequence"/>
</dbReference>
<dbReference type="Proteomes" id="UP000682892">
    <property type="component" value="Chromosome 1"/>
</dbReference>
<dbReference type="GO" id="GO:0005576">
    <property type="term" value="C:extracellular region"/>
    <property type="evidence" value="ECO:0000250"/>
    <property type="project" value="UniProtKB"/>
</dbReference>
<dbReference type="GO" id="GO:0071858">
    <property type="term" value="F:corazonin receptor binding"/>
    <property type="evidence" value="ECO:0007669"/>
    <property type="project" value="InterPro"/>
</dbReference>
<dbReference type="GO" id="GO:0005184">
    <property type="term" value="F:neuropeptide hormone activity"/>
    <property type="evidence" value="ECO:0000250"/>
    <property type="project" value="UniProtKB"/>
</dbReference>
<dbReference type="GO" id="GO:0007218">
    <property type="term" value="P:neuropeptide signaling pathway"/>
    <property type="evidence" value="ECO:0007669"/>
    <property type="project" value="UniProtKB-KW"/>
</dbReference>
<dbReference type="GO" id="GO:0045823">
    <property type="term" value="P:positive regulation of heart contraction"/>
    <property type="evidence" value="ECO:0000250"/>
    <property type="project" value="UniProtKB"/>
</dbReference>
<dbReference type="InterPro" id="IPR020190">
    <property type="entry name" value="Procorazonin"/>
</dbReference>
<dbReference type="Pfam" id="PF17308">
    <property type="entry name" value="Corazonin"/>
    <property type="match status" value="1"/>
</dbReference>